<dbReference type="EC" id="2.1.1.197" evidence="1"/>
<dbReference type="EMBL" id="CP000568">
    <property type="protein sequence ID" value="ABN51266.1"/>
    <property type="molecule type" value="Genomic_DNA"/>
</dbReference>
<dbReference type="RefSeq" id="WP_003511934.1">
    <property type="nucleotide sequence ID" value="NC_009012.1"/>
</dbReference>
<dbReference type="SMR" id="A3DBD7"/>
<dbReference type="STRING" id="203119.Cthe_0024"/>
<dbReference type="GeneID" id="35802862"/>
<dbReference type="KEGG" id="cth:Cthe_0024"/>
<dbReference type="eggNOG" id="COG4106">
    <property type="taxonomic scope" value="Bacteria"/>
</dbReference>
<dbReference type="HOGENOM" id="CLU_046586_2_3_9"/>
<dbReference type="OrthoDB" id="9774345at2"/>
<dbReference type="UniPathway" id="UPA00078"/>
<dbReference type="Proteomes" id="UP000002145">
    <property type="component" value="Chromosome"/>
</dbReference>
<dbReference type="GO" id="GO:0010340">
    <property type="term" value="F:carboxyl-O-methyltransferase activity"/>
    <property type="evidence" value="ECO:0007669"/>
    <property type="project" value="UniProtKB-UniRule"/>
</dbReference>
<dbReference type="GO" id="GO:0102130">
    <property type="term" value="F:malonyl-CoA methyltransferase activity"/>
    <property type="evidence" value="ECO:0007669"/>
    <property type="project" value="UniProtKB-EC"/>
</dbReference>
<dbReference type="GO" id="GO:0009102">
    <property type="term" value="P:biotin biosynthetic process"/>
    <property type="evidence" value="ECO:0007669"/>
    <property type="project" value="UniProtKB-UniRule"/>
</dbReference>
<dbReference type="GO" id="GO:0032259">
    <property type="term" value="P:methylation"/>
    <property type="evidence" value="ECO:0007669"/>
    <property type="project" value="UniProtKB-KW"/>
</dbReference>
<dbReference type="CDD" id="cd02440">
    <property type="entry name" value="AdoMet_MTases"/>
    <property type="match status" value="1"/>
</dbReference>
<dbReference type="Gene3D" id="3.40.50.150">
    <property type="entry name" value="Vaccinia Virus protein VP39"/>
    <property type="match status" value="1"/>
</dbReference>
<dbReference type="HAMAP" id="MF_00835">
    <property type="entry name" value="BioC"/>
    <property type="match status" value="1"/>
</dbReference>
<dbReference type="InterPro" id="IPR011814">
    <property type="entry name" value="BioC"/>
</dbReference>
<dbReference type="InterPro" id="IPR041698">
    <property type="entry name" value="Methyltransf_25"/>
</dbReference>
<dbReference type="InterPro" id="IPR029063">
    <property type="entry name" value="SAM-dependent_MTases_sf"/>
</dbReference>
<dbReference type="NCBIfam" id="TIGR02072">
    <property type="entry name" value="BioC"/>
    <property type="match status" value="1"/>
</dbReference>
<dbReference type="PANTHER" id="PTHR43861:SF1">
    <property type="entry name" value="TRANS-ACONITATE 2-METHYLTRANSFERASE"/>
    <property type="match status" value="1"/>
</dbReference>
<dbReference type="PANTHER" id="PTHR43861">
    <property type="entry name" value="TRANS-ACONITATE 2-METHYLTRANSFERASE-RELATED"/>
    <property type="match status" value="1"/>
</dbReference>
<dbReference type="Pfam" id="PF13649">
    <property type="entry name" value="Methyltransf_25"/>
    <property type="match status" value="1"/>
</dbReference>
<dbReference type="SUPFAM" id="SSF53335">
    <property type="entry name" value="S-adenosyl-L-methionine-dependent methyltransferases"/>
    <property type="match status" value="1"/>
</dbReference>
<organism>
    <name type="scientific">Acetivibrio thermocellus (strain ATCC 27405 / DSM 1237 / JCM 9322 / NBRC 103400 / NCIMB 10682 / NRRL B-4536 / VPI 7372)</name>
    <name type="common">Clostridium thermocellum</name>
    <dbReference type="NCBI Taxonomy" id="203119"/>
    <lineage>
        <taxon>Bacteria</taxon>
        <taxon>Bacillati</taxon>
        <taxon>Bacillota</taxon>
        <taxon>Clostridia</taxon>
        <taxon>Eubacteriales</taxon>
        <taxon>Oscillospiraceae</taxon>
        <taxon>Acetivibrio</taxon>
    </lineage>
</organism>
<protein>
    <recommendedName>
        <fullName evidence="1">Malonyl-[acyl-carrier protein] O-methyltransferase</fullName>
        <shortName evidence="1">Malonyl-ACP O-methyltransferase</shortName>
        <ecNumber evidence="1">2.1.1.197</ecNumber>
    </recommendedName>
    <alternativeName>
        <fullName evidence="1">Biotin synthesis protein BioC</fullName>
    </alternativeName>
</protein>
<name>BIOC_ACET2</name>
<keyword id="KW-0093">Biotin biosynthesis</keyword>
<keyword id="KW-0489">Methyltransferase</keyword>
<keyword id="KW-1185">Reference proteome</keyword>
<keyword id="KW-0949">S-adenosyl-L-methionine</keyword>
<keyword id="KW-0808">Transferase</keyword>
<reference key="1">
    <citation type="submission" date="2007-02" db="EMBL/GenBank/DDBJ databases">
        <title>Complete sequence of Clostridium thermocellum ATCC 27405.</title>
        <authorList>
            <consortium name="US DOE Joint Genome Institute"/>
            <person name="Copeland A."/>
            <person name="Lucas S."/>
            <person name="Lapidus A."/>
            <person name="Barry K."/>
            <person name="Detter J.C."/>
            <person name="Glavina del Rio T."/>
            <person name="Hammon N."/>
            <person name="Israni S."/>
            <person name="Dalin E."/>
            <person name="Tice H."/>
            <person name="Pitluck S."/>
            <person name="Chertkov O."/>
            <person name="Brettin T."/>
            <person name="Bruce D."/>
            <person name="Han C."/>
            <person name="Tapia R."/>
            <person name="Gilna P."/>
            <person name="Schmutz J."/>
            <person name="Larimer F."/>
            <person name="Land M."/>
            <person name="Hauser L."/>
            <person name="Kyrpides N."/>
            <person name="Mikhailova N."/>
            <person name="Wu J.H.D."/>
            <person name="Newcomb M."/>
            <person name="Richardson P."/>
        </authorList>
    </citation>
    <scope>NUCLEOTIDE SEQUENCE [LARGE SCALE GENOMIC DNA]</scope>
    <source>
        <strain>ATCC 27405 / DSM 1237 / JCM 9322 / NBRC 103400 / NCIMB 10682 / NRRL B-4536 / VPI 7372</strain>
    </source>
</reference>
<accession>A3DBD7</accession>
<gene>
    <name evidence="1" type="primary">bioC</name>
    <name type="ordered locus">Cthe_0024</name>
</gene>
<sequence length="283" mass="32644">MIDKKILQMHFSRNAKNYDAYAKVQKKMANTLLDMLDLDSKSRLDILDVGCGTGYLTKLLLDRWPDARITAIDIAPGMIEYARDRFNESNVEFACLDIEEAELNQKYDLVISNATFQWFNDLGGTVNKLVQSLKSDGVLAFSTFGHMTFSELHFSYETARRKLKIDEEFPPGQKFCNAKEILKICCETFEGLEGFEFDTVKKESLEYEYFYTVREFLDSVKKIGANNSNKQRKVNTALTKEMIRIYEEMFKVNGLVRATYHCIFITSRKKLAANTRRLVNAVV</sequence>
<comment type="function">
    <text evidence="1">Converts the free carboxyl group of a malonyl-thioester to its methyl ester by transfer of a methyl group from S-adenosyl-L-methionine (SAM). It allows to synthesize pimeloyl-ACP via the fatty acid synthetic pathway.</text>
</comment>
<comment type="catalytic activity">
    <reaction evidence="1">
        <text>malonyl-[ACP] + S-adenosyl-L-methionine = malonyl-[ACP] methyl ester + S-adenosyl-L-homocysteine</text>
        <dbReference type="Rhea" id="RHEA:17105"/>
        <dbReference type="Rhea" id="RHEA-COMP:9623"/>
        <dbReference type="Rhea" id="RHEA-COMP:9954"/>
        <dbReference type="ChEBI" id="CHEBI:57856"/>
        <dbReference type="ChEBI" id="CHEBI:59789"/>
        <dbReference type="ChEBI" id="CHEBI:78449"/>
        <dbReference type="ChEBI" id="CHEBI:78845"/>
        <dbReference type="EC" id="2.1.1.197"/>
    </reaction>
</comment>
<comment type="pathway">
    <text evidence="1">Cofactor biosynthesis; biotin biosynthesis.</text>
</comment>
<comment type="similarity">
    <text evidence="1">Belongs to the methyltransferase superfamily.</text>
</comment>
<evidence type="ECO:0000255" key="1">
    <source>
        <dbReference type="HAMAP-Rule" id="MF_00835"/>
    </source>
</evidence>
<proteinExistence type="inferred from homology"/>
<feature type="chain" id="PRO_0000412490" description="Malonyl-[acyl-carrier protein] O-methyltransferase">
    <location>
        <begin position="1"/>
        <end position="283"/>
    </location>
</feature>